<name>HSLU_PERMH</name>
<feature type="chain" id="PRO_1000125446" description="ATP-dependent protease ATPase subunit HslU">
    <location>
        <begin position="1"/>
        <end position="448"/>
    </location>
</feature>
<feature type="binding site" evidence="1">
    <location>
        <position position="21"/>
    </location>
    <ligand>
        <name>ATP</name>
        <dbReference type="ChEBI" id="CHEBI:30616"/>
    </ligand>
</feature>
<feature type="binding site" evidence="1">
    <location>
        <begin position="63"/>
        <end position="68"/>
    </location>
    <ligand>
        <name>ATP</name>
        <dbReference type="ChEBI" id="CHEBI:30616"/>
    </ligand>
</feature>
<feature type="binding site" evidence="1">
    <location>
        <position position="261"/>
    </location>
    <ligand>
        <name>ATP</name>
        <dbReference type="ChEBI" id="CHEBI:30616"/>
    </ligand>
</feature>
<feature type="binding site" evidence="1">
    <location>
        <position position="326"/>
    </location>
    <ligand>
        <name>ATP</name>
        <dbReference type="ChEBI" id="CHEBI:30616"/>
    </ligand>
</feature>
<feature type="binding site" evidence="1">
    <location>
        <position position="398"/>
    </location>
    <ligand>
        <name>ATP</name>
        <dbReference type="ChEBI" id="CHEBI:30616"/>
    </ligand>
</feature>
<reference key="1">
    <citation type="journal article" date="2009" name="J. Bacteriol.">
        <title>Complete and draft genome sequences of six members of the Aquificales.</title>
        <authorList>
            <person name="Reysenbach A.-L."/>
            <person name="Hamamura N."/>
            <person name="Podar M."/>
            <person name="Griffiths E."/>
            <person name="Ferreira S."/>
            <person name="Hochstein R."/>
            <person name="Heidelberg J."/>
            <person name="Johnson J."/>
            <person name="Mead D."/>
            <person name="Pohorille A."/>
            <person name="Sarmiento M."/>
            <person name="Schweighofer K."/>
            <person name="Seshadri R."/>
            <person name="Voytek M.A."/>
        </authorList>
    </citation>
    <scope>NUCLEOTIDE SEQUENCE [LARGE SCALE GENOMIC DNA]</scope>
    <source>
        <strain>DSM 14350 / EX-H1</strain>
    </source>
</reference>
<comment type="function">
    <text evidence="1">ATPase subunit of a proteasome-like degradation complex; this subunit has chaperone activity. The binding of ATP and its subsequent hydrolysis by HslU are essential for unfolding of protein substrates subsequently hydrolyzed by HslV. HslU recognizes the N-terminal part of its protein substrates and unfolds these before they are guided to HslV for hydrolysis.</text>
</comment>
<comment type="subunit">
    <text evidence="1">A double ring-shaped homohexamer of HslV is capped on each side by a ring-shaped HslU homohexamer. The assembly of the HslU/HslV complex is dependent on binding of ATP.</text>
</comment>
<comment type="subcellular location">
    <subcellularLocation>
        <location evidence="1">Cytoplasm</location>
    </subcellularLocation>
</comment>
<comment type="similarity">
    <text evidence="1">Belongs to the ClpX chaperone family. HslU subfamily.</text>
</comment>
<keyword id="KW-0067">ATP-binding</keyword>
<keyword id="KW-0143">Chaperone</keyword>
<keyword id="KW-0963">Cytoplasm</keyword>
<keyword id="KW-0547">Nucleotide-binding</keyword>
<keyword id="KW-1185">Reference proteome</keyword>
<evidence type="ECO:0000255" key="1">
    <source>
        <dbReference type="HAMAP-Rule" id="MF_00249"/>
    </source>
</evidence>
<proteinExistence type="inferred from homology"/>
<sequence length="448" mass="50768">MQLREDLTPKQIVEELDKYIVGQKEAKKAVAIALRNRWRRHKLPEDLRDEVIPKNILMIGPTGVGKTEIARRLASLVGAPFIKVEATKFTEVGYVGRDVESIIRELAEASFKMVKAEKMEKVREKAKEIAEEKILDYLVPMRVKRYGTLETFEEETSPAREKFRQMLRNGELDERTVEIDVEEKGVSVVGGVIAPGLEDIENQLKDLFSSLAPTKRKRRKMTVREAMRVLEQQEAEKLIDMDEVASEAVYRAENFGIVFIDEIDKVAGKSTGSSPDVSREGVQRDLLPIVEGTTVSTKYGPVKTDHILFIAAGAFHLSKPSDLIPELQGRFPIRVELQPLTKDDFVKILTQPKNALIKQYKALMATEGVDIEFTDDAIEAIAEIAEQVNEKTENIGARRLHTILERIMEDYSFEAPDLKGQHIIIDEKVIRSKLGDIIQSEDLTRYIL</sequence>
<accession>C0QUM2</accession>
<dbReference type="EMBL" id="CP001230">
    <property type="protein sequence ID" value="ACO03654.1"/>
    <property type="molecule type" value="Genomic_DNA"/>
</dbReference>
<dbReference type="RefSeq" id="WP_012675893.1">
    <property type="nucleotide sequence ID" value="NC_012440.1"/>
</dbReference>
<dbReference type="SMR" id="C0QUM2"/>
<dbReference type="STRING" id="123214.PERMA_0598"/>
<dbReference type="PaxDb" id="123214-PERMA_0598"/>
<dbReference type="KEGG" id="pmx:PERMA_0598"/>
<dbReference type="eggNOG" id="COG1220">
    <property type="taxonomic scope" value="Bacteria"/>
</dbReference>
<dbReference type="HOGENOM" id="CLU_033123_0_0_0"/>
<dbReference type="OrthoDB" id="9804062at2"/>
<dbReference type="Proteomes" id="UP000001366">
    <property type="component" value="Chromosome"/>
</dbReference>
<dbReference type="GO" id="GO:0009376">
    <property type="term" value="C:HslUV protease complex"/>
    <property type="evidence" value="ECO:0007669"/>
    <property type="project" value="UniProtKB-UniRule"/>
</dbReference>
<dbReference type="GO" id="GO:0005524">
    <property type="term" value="F:ATP binding"/>
    <property type="evidence" value="ECO:0007669"/>
    <property type="project" value="UniProtKB-UniRule"/>
</dbReference>
<dbReference type="GO" id="GO:0016887">
    <property type="term" value="F:ATP hydrolysis activity"/>
    <property type="evidence" value="ECO:0007669"/>
    <property type="project" value="InterPro"/>
</dbReference>
<dbReference type="GO" id="GO:0008233">
    <property type="term" value="F:peptidase activity"/>
    <property type="evidence" value="ECO:0007669"/>
    <property type="project" value="InterPro"/>
</dbReference>
<dbReference type="GO" id="GO:0036402">
    <property type="term" value="F:proteasome-activating activity"/>
    <property type="evidence" value="ECO:0007669"/>
    <property type="project" value="UniProtKB-UniRule"/>
</dbReference>
<dbReference type="GO" id="GO:0043335">
    <property type="term" value="P:protein unfolding"/>
    <property type="evidence" value="ECO:0007669"/>
    <property type="project" value="UniProtKB-UniRule"/>
</dbReference>
<dbReference type="GO" id="GO:0051603">
    <property type="term" value="P:proteolysis involved in protein catabolic process"/>
    <property type="evidence" value="ECO:0007669"/>
    <property type="project" value="TreeGrafter"/>
</dbReference>
<dbReference type="CDD" id="cd19498">
    <property type="entry name" value="RecA-like_HslU"/>
    <property type="match status" value="1"/>
</dbReference>
<dbReference type="FunFam" id="3.40.50.300:FF:000213">
    <property type="entry name" value="ATP-dependent protease ATPase subunit HslU"/>
    <property type="match status" value="1"/>
</dbReference>
<dbReference type="FunFam" id="3.40.50.300:FF:000220">
    <property type="entry name" value="ATP-dependent protease ATPase subunit HslU"/>
    <property type="match status" value="1"/>
</dbReference>
<dbReference type="Gene3D" id="1.10.8.60">
    <property type="match status" value="1"/>
</dbReference>
<dbReference type="Gene3D" id="3.40.50.300">
    <property type="entry name" value="P-loop containing nucleotide triphosphate hydrolases"/>
    <property type="match status" value="2"/>
</dbReference>
<dbReference type="HAMAP" id="MF_00249">
    <property type="entry name" value="HslU"/>
    <property type="match status" value="1"/>
</dbReference>
<dbReference type="InterPro" id="IPR003593">
    <property type="entry name" value="AAA+_ATPase"/>
</dbReference>
<dbReference type="InterPro" id="IPR050052">
    <property type="entry name" value="ATP-dep_Clp_protease_ClpX"/>
</dbReference>
<dbReference type="InterPro" id="IPR003959">
    <property type="entry name" value="ATPase_AAA_core"/>
</dbReference>
<dbReference type="InterPro" id="IPR019489">
    <property type="entry name" value="Clp_ATPase_C"/>
</dbReference>
<dbReference type="InterPro" id="IPR004491">
    <property type="entry name" value="HslU"/>
</dbReference>
<dbReference type="InterPro" id="IPR027417">
    <property type="entry name" value="P-loop_NTPase"/>
</dbReference>
<dbReference type="NCBIfam" id="TIGR00390">
    <property type="entry name" value="hslU"/>
    <property type="match status" value="1"/>
</dbReference>
<dbReference type="NCBIfam" id="NF003544">
    <property type="entry name" value="PRK05201.1"/>
    <property type="match status" value="1"/>
</dbReference>
<dbReference type="PANTHER" id="PTHR48102">
    <property type="entry name" value="ATP-DEPENDENT CLP PROTEASE ATP-BINDING SUBUNIT CLPX-LIKE, MITOCHONDRIAL-RELATED"/>
    <property type="match status" value="1"/>
</dbReference>
<dbReference type="PANTHER" id="PTHR48102:SF3">
    <property type="entry name" value="ATP-DEPENDENT PROTEASE ATPASE SUBUNIT HSLU"/>
    <property type="match status" value="1"/>
</dbReference>
<dbReference type="Pfam" id="PF00004">
    <property type="entry name" value="AAA"/>
    <property type="match status" value="1"/>
</dbReference>
<dbReference type="Pfam" id="PF07724">
    <property type="entry name" value="AAA_2"/>
    <property type="match status" value="1"/>
</dbReference>
<dbReference type="Pfam" id="PF10431">
    <property type="entry name" value="ClpB_D2-small"/>
    <property type="match status" value="1"/>
</dbReference>
<dbReference type="SMART" id="SM00382">
    <property type="entry name" value="AAA"/>
    <property type="match status" value="1"/>
</dbReference>
<dbReference type="SMART" id="SM01086">
    <property type="entry name" value="ClpB_D2-small"/>
    <property type="match status" value="1"/>
</dbReference>
<dbReference type="SUPFAM" id="SSF52540">
    <property type="entry name" value="P-loop containing nucleoside triphosphate hydrolases"/>
    <property type="match status" value="1"/>
</dbReference>
<gene>
    <name evidence="1" type="primary">hslU</name>
    <name type="ordered locus">PERMA_0598</name>
</gene>
<organism>
    <name type="scientific">Persephonella marina (strain DSM 14350 / EX-H1)</name>
    <dbReference type="NCBI Taxonomy" id="123214"/>
    <lineage>
        <taxon>Bacteria</taxon>
        <taxon>Pseudomonadati</taxon>
        <taxon>Aquificota</taxon>
        <taxon>Aquificia</taxon>
        <taxon>Aquificales</taxon>
        <taxon>Hydrogenothermaceae</taxon>
        <taxon>Persephonella</taxon>
    </lineage>
</organism>
<protein>
    <recommendedName>
        <fullName evidence="1">ATP-dependent protease ATPase subunit HslU</fullName>
    </recommendedName>
    <alternativeName>
        <fullName evidence="1">Unfoldase HslU</fullName>
    </alternativeName>
</protein>